<evidence type="ECO:0000255" key="1">
    <source>
        <dbReference type="HAMAP-Rule" id="MF_00172"/>
    </source>
</evidence>
<gene>
    <name evidence="1" type="primary">metE</name>
    <name type="ordered locus">llmg_1225</name>
</gene>
<comment type="function">
    <text evidence="1">Catalyzes the transfer of a methyl group from 5-methyltetrahydrofolate to homocysteine resulting in methionine formation.</text>
</comment>
<comment type="catalytic activity">
    <reaction evidence="1">
        <text>5-methyltetrahydropteroyltri-L-glutamate + L-homocysteine = tetrahydropteroyltri-L-glutamate + L-methionine</text>
        <dbReference type="Rhea" id="RHEA:21196"/>
        <dbReference type="ChEBI" id="CHEBI:57844"/>
        <dbReference type="ChEBI" id="CHEBI:58140"/>
        <dbReference type="ChEBI" id="CHEBI:58199"/>
        <dbReference type="ChEBI" id="CHEBI:58207"/>
        <dbReference type="EC" id="2.1.1.14"/>
    </reaction>
</comment>
<comment type="cofactor">
    <cofactor evidence="1">
        <name>Zn(2+)</name>
        <dbReference type="ChEBI" id="CHEBI:29105"/>
    </cofactor>
    <text evidence="1">Binds 1 zinc ion per subunit.</text>
</comment>
<comment type="pathway">
    <text evidence="1">Amino-acid biosynthesis; L-methionine biosynthesis via de novo pathway; L-methionine from L-homocysteine (MetE route): step 1/1.</text>
</comment>
<comment type="similarity">
    <text evidence="1">Belongs to the vitamin-B12 independent methionine synthase family.</text>
</comment>
<dbReference type="EC" id="2.1.1.14" evidence="1"/>
<dbReference type="EMBL" id="AM406671">
    <property type="protein sequence ID" value="CAL97816.1"/>
    <property type="molecule type" value="Genomic_DNA"/>
</dbReference>
<dbReference type="RefSeq" id="WP_011835114.1">
    <property type="nucleotide sequence ID" value="NC_009004.1"/>
</dbReference>
<dbReference type="SMR" id="A2RKK4"/>
<dbReference type="STRING" id="416870.llmg_1225"/>
<dbReference type="KEGG" id="llm:llmg_1225"/>
<dbReference type="eggNOG" id="COG0620">
    <property type="taxonomic scope" value="Bacteria"/>
</dbReference>
<dbReference type="HOGENOM" id="CLU_013175_0_0_9"/>
<dbReference type="OrthoDB" id="244285at2"/>
<dbReference type="PhylomeDB" id="A2RKK4"/>
<dbReference type="UniPathway" id="UPA00051">
    <property type="reaction ID" value="UER00082"/>
</dbReference>
<dbReference type="Proteomes" id="UP000000364">
    <property type="component" value="Chromosome"/>
</dbReference>
<dbReference type="GO" id="GO:0003871">
    <property type="term" value="F:5-methyltetrahydropteroyltriglutamate-homocysteine S-methyltransferase activity"/>
    <property type="evidence" value="ECO:0007669"/>
    <property type="project" value="UniProtKB-UniRule"/>
</dbReference>
<dbReference type="GO" id="GO:0008270">
    <property type="term" value="F:zinc ion binding"/>
    <property type="evidence" value="ECO:0007669"/>
    <property type="project" value="InterPro"/>
</dbReference>
<dbReference type="GO" id="GO:0009086">
    <property type="term" value="P:methionine biosynthetic process"/>
    <property type="evidence" value="ECO:0007669"/>
    <property type="project" value="UniProtKB-UniRule"/>
</dbReference>
<dbReference type="GO" id="GO:0032259">
    <property type="term" value="P:methylation"/>
    <property type="evidence" value="ECO:0007669"/>
    <property type="project" value="UniProtKB-KW"/>
</dbReference>
<dbReference type="CDD" id="cd03311">
    <property type="entry name" value="CIMS_C_terminal_like"/>
    <property type="match status" value="1"/>
</dbReference>
<dbReference type="CDD" id="cd03312">
    <property type="entry name" value="CIMS_N_terminal_like"/>
    <property type="match status" value="1"/>
</dbReference>
<dbReference type="Gene3D" id="3.20.20.210">
    <property type="match status" value="2"/>
</dbReference>
<dbReference type="HAMAP" id="MF_00172">
    <property type="entry name" value="Meth_synth"/>
    <property type="match status" value="1"/>
</dbReference>
<dbReference type="InterPro" id="IPR013215">
    <property type="entry name" value="Cbl-indep_Met_Synth_N"/>
</dbReference>
<dbReference type="InterPro" id="IPR006276">
    <property type="entry name" value="Cobalamin-indep_Met_synthase"/>
</dbReference>
<dbReference type="InterPro" id="IPR002629">
    <property type="entry name" value="Met_Synth_C/arc"/>
</dbReference>
<dbReference type="InterPro" id="IPR038071">
    <property type="entry name" value="UROD/MetE-like_sf"/>
</dbReference>
<dbReference type="NCBIfam" id="TIGR01371">
    <property type="entry name" value="met_syn_B12ind"/>
    <property type="match status" value="1"/>
</dbReference>
<dbReference type="NCBIfam" id="NF003556">
    <property type="entry name" value="PRK05222.1"/>
    <property type="match status" value="1"/>
</dbReference>
<dbReference type="PANTHER" id="PTHR30519">
    <property type="entry name" value="5-METHYLTETRAHYDROPTEROYLTRIGLUTAMATE--HOMOCYSTEINE METHYLTRANSFERASE"/>
    <property type="match status" value="1"/>
</dbReference>
<dbReference type="Pfam" id="PF08267">
    <property type="entry name" value="Meth_synt_1"/>
    <property type="match status" value="1"/>
</dbReference>
<dbReference type="Pfam" id="PF01717">
    <property type="entry name" value="Meth_synt_2"/>
    <property type="match status" value="1"/>
</dbReference>
<dbReference type="PIRSF" id="PIRSF000382">
    <property type="entry name" value="MeTrfase_B12_ind"/>
    <property type="match status" value="1"/>
</dbReference>
<dbReference type="SUPFAM" id="SSF51726">
    <property type="entry name" value="UROD/MetE-like"/>
    <property type="match status" value="2"/>
</dbReference>
<keyword id="KW-0028">Amino-acid biosynthesis</keyword>
<keyword id="KW-0479">Metal-binding</keyword>
<keyword id="KW-0486">Methionine biosynthesis</keyword>
<keyword id="KW-0489">Methyltransferase</keyword>
<keyword id="KW-0677">Repeat</keyword>
<keyword id="KW-0808">Transferase</keyword>
<keyword id="KW-0862">Zinc</keyword>
<organism>
    <name type="scientific">Lactococcus lactis subsp. cremoris (strain MG1363)</name>
    <dbReference type="NCBI Taxonomy" id="416870"/>
    <lineage>
        <taxon>Bacteria</taxon>
        <taxon>Bacillati</taxon>
        <taxon>Bacillota</taxon>
        <taxon>Bacilli</taxon>
        <taxon>Lactobacillales</taxon>
        <taxon>Streptococcaceae</taxon>
        <taxon>Lactococcus</taxon>
        <taxon>Lactococcus cremoris subsp. cremoris</taxon>
    </lineage>
</organism>
<name>METE_LACLM</name>
<reference key="1">
    <citation type="journal article" date="2007" name="J. Bacteriol.">
        <title>The complete genome sequence of the lactic acid bacterial paradigm Lactococcus lactis subsp. cremoris MG1363.</title>
        <authorList>
            <person name="Wegmann U."/>
            <person name="O'Connell-Motherway M."/>
            <person name="Zomer A."/>
            <person name="Buist G."/>
            <person name="Shearman C."/>
            <person name="Canchaya C."/>
            <person name="Ventura M."/>
            <person name="Goesmann A."/>
            <person name="Gasson M.J."/>
            <person name="Kuipers O.P."/>
            <person name="van Sinderen D."/>
            <person name="Kok J."/>
        </authorList>
    </citation>
    <scope>NUCLEOTIDE SEQUENCE [LARGE SCALE GENOMIC DNA]</scope>
    <source>
        <strain>MG1363</strain>
    </source>
</reference>
<sequence length="757" mass="87116">MKKSIIAFPRIGSNRELKFALEKYFRKEISEDELQIVAKELRLESWKSQKEAGIDYPISNDFSFYDQTLDLSIALGVIPERYKKLKLNELDTLFALARGFQDEENDVKARPMKKWFNTNYHYIVPEISKETVIKANFSKLLNEYQEAKTAGFETRPTIIGPYTFLILADYLSGVTEDAILSDLIGAYTILFDQLNNLGGEWLQIEEPALVLDQTEEEQQLFIKIYQELLKNKNKLRVLLQTYFGDLRNSYQEIIKLDFDGIGLDFVEGRESVKLVQKYGFPKNKLLFAGVVNGKNIWRNHYQKTLSLLKDLGNIDNIVINTSCSLQHVPVTTENETKLSKEILNHFAFAKEKLVEVSEISEIYVKKNTSLLDKNIALFDKNRVQENIQLKQKIIHLTDKDFIRTPSLVERRADQIKALNLPLLPTTTIGSFPQTPEIRKSRLQYKRGELSKSDYEAFLEEKIKECLELQENIGLDVLVHGEFERNDMVEYFGEQLDGYIFTQKAWVQSYGTRCVKPPIVWGDITRPQAMTVRWSAYAQSQTSKPVKGMLTGPVTILNWSFPREDISLKESTLQLALAVQEEVLDLEKSGVKIIQIDEAALREKLPLRRSDWYSEYLDWAIPAFRLVHSKVKAETQIHTHMCYSEFEDIIPSIDAMDADVISFEASRSQLSIIDALKAHHFQTLVGPGVYDIHSPRIPSSQEIKIQLEKILNKLPIEQVWVNPDCGLKTRGNKETIPSLTHLVEATKEVRKGKITYDK</sequence>
<accession>A2RKK4</accession>
<feature type="chain" id="PRO_1000017250" description="5-methyltetrahydropteroyltriglutamate--homocysteine methyltransferase">
    <location>
        <begin position="1"/>
        <end position="757"/>
    </location>
</feature>
<feature type="active site" description="Proton donor" evidence="1">
    <location>
        <position position="692"/>
    </location>
</feature>
<feature type="binding site" evidence="1">
    <location>
        <begin position="15"/>
        <end position="18"/>
    </location>
    <ligand>
        <name>5-methyltetrahydropteroyltri-L-glutamate</name>
        <dbReference type="ChEBI" id="CHEBI:58207"/>
    </ligand>
</feature>
<feature type="binding site" evidence="1">
    <location>
        <position position="114"/>
    </location>
    <ligand>
        <name>5-methyltetrahydropteroyltri-L-glutamate</name>
        <dbReference type="ChEBI" id="CHEBI:58207"/>
    </ligand>
</feature>
<feature type="binding site" evidence="1">
    <location>
        <begin position="428"/>
        <end position="430"/>
    </location>
    <ligand>
        <name>L-homocysteine</name>
        <dbReference type="ChEBI" id="CHEBI:58199"/>
    </ligand>
</feature>
<feature type="binding site" evidence="1">
    <location>
        <begin position="428"/>
        <end position="430"/>
    </location>
    <ligand>
        <name>L-methionine</name>
        <dbReference type="ChEBI" id="CHEBI:57844"/>
    </ligand>
</feature>
<feature type="binding site" evidence="1">
    <location>
        <position position="481"/>
    </location>
    <ligand>
        <name>L-homocysteine</name>
        <dbReference type="ChEBI" id="CHEBI:58199"/>
    </ligand>
</feature>
<feature type="binding site" evidence="1">
    <location>
        <position position="481"/>
    </location>
    <ligand>
        <name>L-methionine</name>
        <dbReference type="ChEBI" id="CHEBI:57844"/>
    </ligand>
</feature>
<feature type="binding site" evidence="1">
    <location>
        <begin position="512"/>
        <end position="513"/>
    </location>
    <ligand>
        <name>5-methyltetrahydropteroyltri-L-glutamate</name>
        <dbReference type="ChEBI" id="CHEBI:58207"/>
    </ligand>
</feature>
<feature type="binding site" evidence="1">
    <location>
        <position position="558"/>
    </location>
    <ligand>
        <name>5-methyltetrahydropteroyltri-L-glutamate</name>
        <dbReference type="ChEBI" id="CHEBI:58207"/>
    </ligand>
</feature>
<feature type="binding site" evidence="1">
    <location>
        <position position="596"/>
    </location>
    <ligand>
        <name>L-homocysteine</name>
        <dbReference type="ChEBI" id="CHEBI:58199"/>
    </ligand>
</feature>
<feature type="binding site" evidence="1">
    <location>
        <position position="596"/>
    </location>
    <ligand>
        <name>L-methionine</name>
        <dbReference type="ChEBI" id="CHEBI:57844"/>
    </ligand>
</feature>
<feature type="binding site" evidence="1">
    <location>
        <position position="602"/>
    </location>
    <ligand>
        <name>5-methyltetrahydropteroyltri-L-glutamate</name>
        <dbReference type="ChEBI" id="CHEBI:58207"/>
    </ligand>
</feature>
<feature type="binding site" evidence="1">
    <location>
        <position position="639"/>
    </location>
    <ligand>
        <name>Zn(2+)</name>
        <dbReference type="ChEBI" id="CHEBI:29105"/>
        <note>catalytic</note>
    </ligand>
</feature>
<feature type="binding site" evidence="1">
    <location>
        <position position="641"/>
    </location>
    <ligand>
        <name>Zn(2+)</name>
        <dbReference type="ChEBI" id="CHEBI:29105"/>
        <note>catalytic</note>
    </ligand>
</feature>
<feature type="binding site" evidence="1">
    <location>
        <position position="663"/>
    </location>
    <ligand>
        <name>Zn(2+)</name>
        <dbReference type="ChEBI" id="CHEBI:29105"/>
        <note>catalytic</note>
    </ligand>
</feature>
<feature type="binding site" evidence="1">
    <location>
        <position position="724"/>
    </location>
    <ligand>
        <name>Zn(2+)</name>
        <dbReference type="ChEBI" id="CHEBI:29105"/>
        <note>catalytic</note>
    </ligand>
</feature>
<proteinExistence type="inferred from homology"/>
<protein>
    <recommendedName>
        <fullName evidence="1">5-methyltetrahydropteroyltriglutamate--homocysteine methyltransferase</fullName>
        <ecNumber evidence="1">2.1.1.14</ecNumber>
    </recommendedName>
    <alternativeName>
        <fullName evidence="1">Cobalamin-independent methionine synthase</fullName>
    </alternativeName>
    <alternativeName>
        <fullName evidence="1">Methionine synthase, vitamin-B12 independent isozyme</fullName>
    </alternativeName>
</protein>